<comment type="function">
    <text>Destroys superoxide anion radicals which are normally produced within the cells and which are toxic to biological systems.</text>
</comment>
<comment type="catalytic activity">
    <reaction>
        <text>2 superoxide + 2 H(+) = H2O2 + O2</text>
        <dbReference type="Rhea" id="RHEA:20696"/>
        <dbReference type="ChEBI" id="CHEBI:15378"/>
        <dbReference type="ChEBI" id="CHEBI:15379"/>
        <dbReference type="ChEBI" id="CHEBI:16240"/>
        <dbReference type="ChEBI" id="CHEBI:18421"/>
        <dbReference type="EC" id="1.15.1.1"/>
    </reaction>
</comment>
<comment type="cofactor">
    <cofactor evidence="1">
        <name>Mn(2+)</name>
        <dbReference type="ChEBI" id="CHEBI:29035"/>
    </cofactor>
    <text evidence="1">Binds 1 Mn(2+) ion per subunit.</text>
</comment>
<comment type="subunit">
    <text evidence="1">Homodimer.</text>
</comment>
<comment type="similarity">
    <text evidence="2">Belongs to the iron/manganese superoxide dismutase family.</text>
</comment>
<comment type="sequence caution" evidence="2">
    <conflict type="erroneous initiation">
        <sequence resource="EMBL-CDS" id="AAF39404"/>
    </conflict>
</comment>
<feature type="chain" id="PRO_0000160025" description="Superoxide dismutase [Mn]">
    <location>
        <begin position="1"/>
        <end position="205"/>
    </location>
</feature>
<feature type="binding site" evidence="1">
    <location>
        <position position="30"/>
    </location>
    <ligand>
        <name>Mn(2+)</name>
        <dbReference type="ChEBI" id="CHEBI:29035"/>
    </ligand>
</feature>
<feature type="binding site" evidence="1">
    <location>
        <position position="78"/>
    </location>
    <ligand>
        <name>Mn(2+)</name>
        <dbReference type="ChEBI" id="CHEBI:29035"/>
    </ligand>
</feature>
<feature type="binding site" evidence="1">
    <location>
        <position position="166"/>
    </location>
    <ligand>
        <name>Mn(2+)</name>
        <dbReference type="ChEBI" id="CHEBI:29035"/>
    </ligand>
</feature>
<feature type="binding site" evidence="1">
    <location>
        <position position="170"/>
    </location>
    <ligand>
        <name>Mn(2+)</name>
        <dbReference type="ChEBI" id="CHEBI:29035"/>
    </ligand>
</feature>
<accession>Q9PKA0</accession>
<dbReference type="EC" id="1.15.1.1"/>
<dbReference type="EMBL" id="AE002160">
    <property type="protein sequence ID" value="AAF39404.1"/>
    <property type="status" value="ALT_INIT"/>
    <property type="molecule type" value="Genomic_DNA"/>
</dbReference>
<dbReference type="PIR" id="A81688">
    <property type="entry name" value="A81688"/>
</dbReference>
<dbReference type="RefSeq" id="WP_010230850.1">
    <property type="nucleotide sequence ID" value="NZ_CP063055.1"/>
</dbReference>
<dbReference type="SMR" id="Q9PKA0"/>
<dbReference type="GeneID" id="1245926"/>
<dbReference type="KEGG" id="cmu:TC_0567"/>
<dbReference type="eggNOG" id="COG0605">
    <property type="taxonomic scope" value="Bacteria"/>
</dbReference>
<dbReference type="HOGENOM" id="CLU_031625_2_1_0"/>
<dbReference type="OrthoDB" id="9803125at2"/>
<dbReference type="Proteomes" id="UP000000800">
    <property type="component" value="Chromosome"/>
</dbReference>
<dbReference type="GO" id="GO:0030145">
    <property type="term" value="F:manganese ion binding"/>
    <property type="evidence" value="ECO:0007669"/>
    <property type="project" value="TreeGrafter"/>
</dbReference>
<dbReference type="GO" id="GO:0004784">
    <property type="term" value="F:superoxide dismutase activity"/>
    <property type="evidence" value="ECO:0007669"/>
    <property type="project" value="UniProtKB-EC"/>
</dbReference>
<dbReference type="FunFam" id="1.10.287.990:FF:000001">
    <property type="entry name" value="Superoxide dismutase"/>
    <property type="match status" value="1"/>
</dbReference>
<dbReference type="FunFam" id="3.55.40.20:FF:000002">
    <property type="entry name" value="Superoxide dismutase"/>
    <property type="match status" value="1"/>
</dbReference>
<dbReference type="Gene3D" id="1.10.287.990">
    <property type="entry name" value="Fe,Mn superoxide dismutase (SOD) domain"/>
    <property type="match status" value="1"/>
</dbReference>
<dbReference type="Gene3D" id="3.55.40.20">
    <property type="entry name" value="Iron/manganese superoxide dismutase, C-terminal domain"/>
    <property type="match status" value="1"/>
</dbReference>
<dbReference type="InterPro" id="IPR050265">
    <property type="entry name" value="Fe/Mn_Superoxide_Dismutase"/>
</dbReference>
<dbReference type="InterPro" id="IPR001189">
    <property type="entry name" value="Mn/Fe_SOD"/>
</dbReference>
<dbReference type="InterPro" id="IPR019833">
    <property type="entry name" value="Mn/Fe_SOD_BS"/>
</dbReference>
<dbReference type="InterPro" id="IPR019832">
    <property type="entry name" value="Mn/Fe_SOD_C"/>
</dbReference>
<dbReference type="InterPro" id="IPR019831">
    <property type="entry name" value="Mn/Fe_SOD_N"/>
</dbReference>
<dbReference type="InterPro" id="IPR036324">
    <property type="entry name" value="Mn/Fe_SOD_N_sf"/>
</dbReference>
<dbReference type="InterPro" id="IPR036314">
    <property type="entry name" value="SOD_C_sf"/>
</dbReference>
<dbReference type="PANTHER" id="PTHR11404">
    <property type="entry name" value="SUPEROXIDE DISMUTASE 2"/>
    <property type="match status" value="1"/>
</dbReference>
<dbReference type="PANTHER" id="PTHR11404:SF6">
    <property type="entry name" value="SUPEROXIDE DISMUTASE [MN], MITOCHONDRIAL"/>
    <property type="match status" value="1"/>
</dbReference>
<dbReference type="Pfam" id="PF02777">
    <property type="entry name" value="Sod_Fe_C"/>
    <property type="match status" value="1"/>
</dbReference>
<dbReference type="Pfam" id="PF00081">
    <property type="entry name" value="Sod_Fe_N"/>
    <property type="match status" value="1"/>
</dbReference>
<dbReference type="PIRSF" id="PIRSF000349">
    <property type="entry name" value="SODismutase"/>
    <property type="match status" value="1"/>
</dbReference>
<dbReference type="PRINTS" id="PR01703">
    <property type="entry name" value="MNSODISMTASE"/>
</dbReference>
<dbReference type="SUPFAM" id="SSF54719">
    <property type="entry name" value="Fe,Mn superoxide dismutase (SOD), C-terminal domain"/>
    <property type="match status" value="1"/>
</dbReference>
<dbReference type="SUPFAM" id="SSF46609">
    <property type="entry name" value="Fe,Mn superoxide dismutase (SOD), N-terminal domain"/>
    <property type="match status" value="1"/>
</dbReference>
<dbReference type="PROSITE" id="PS00088">
    <property type="entry name" value="SOD_MN"/>
    <property type="match status" value="1"/>
</dbReference>
<organism>
    <name type="scientific">Chlamydia muridarum (strain MoPn / Nigg)</name>
    <dbReference type="NCBI Taxonomy" id="243161"/>
    <lineage>
        <taxon>Bacteria</taxon>
        <taxon>Pseudomonadati</taxon>
        <taxon>Chlamydiota</taxon>
        <taxon>Chlamydiia</taxon>
        <taxon>Chlamydiales</taxon>
        <taxon>Chlamydiaceae</taxon>
        <taxon>Chlamydia/Chlamydophila group</taxon>
        <taxon>Chlamydia</taxon>
    </lineage>
</organism>
<evidence type="ECO:0000250" key="1"/>
<evidence type="ECO:0000305" key="2"/>
<reference key="1">
    <citation type="journal article" date="2000" name="Nucleic Acids Res.">
        <title>Genome sequences of Chlamydia trachomatis MoPn and Chlamydia pneumoniae AR39.</title>
        <authorList>
            <person name="Read T.D."/>
            <person name="Brunham R.C."/>
            <person name="Shen C."/>
            <person name="Gill S.R."/>
            <person name="Heidelberg J.F."/>
            <person name="White O."/>
            <person name="Hickey E.K."/>
            <person name="Peterson J.D."/>
            <person name="Utterback T.R."/>
            <person name="Berry K.J."/>
            <person name="Bass S."/>
            <person name="Linher K.D."/>
            <person name="Weidman J.F."/>
            <person name="Khouri H.M."/>
            <person name="Craven B."/>
            <person name="Bowman C."/>
            <person name="Dodson R.J."/>
            <person name="Gwinn M.L."/>
            <person name="Nelson W.C."/>
            <person name="DeBoy R.T."/>
            <person name="Kolonay J.F."/>
            <person name="McClarty G."/>
            <person name="Salzberg S.L."/>
            <person name="Eisen J.A."/>
            <person name="Fraser C.M."/>
        </authorList>
    </citation>
    <scope>NUCLEOTIDE SEQUENCE [LARGE SCALE GENOMIC DNA]</scope>
    <source>
        <strain>MoPn / Nigg</strain>
    </source>
</reference>
<keyword id="KW-0464">Manganese</keyword>
<keyword id="KW-0479">Metal-binding</keyword>
<keyword id="KW-0560">Oxidoreductase</keyword>
<gene>
    <name type="primary">sodA</name>
    <name type="ordered locus">TC_0567</name>
</gene>
<name>SODM_CHLMU</name>
<proteinExistence type="inferred from homology"/>
<protein>
    <recommendedName>
        <fullName>Superoxide dismutase [Mn]</fullName>
        <ecNumber>1.15.1.1</ecNumber>
    </recommendedName>
</protein>
<sequence>MVFSSYKLPDLPYDYDALEPVISAEIMHLHHQKHHQGYINNLNEALKSLDVASATQDLTGLIAINPALRFNGGGHINHSLFWEMLAPQNKGGGTPPRHELLKLIEKFWGSFDNFLKNFISSSAAVQGSGWGWLAFCPKKQELMIQTTANQDPLEATTGMIPLLGVDVWEHAYYLQYKNARLDYLKNFPSIINWDYIESRFVEMSK</sequence>